<comment type="function">
    <text evidence="1">Functions in the N-end rule pathway of protein degradation where it conjugates Leu from its aminoacyl-tRNA to the N-termini of proteins containing an N-terminal aspartate or glutamate.</text>
</comment>
<comment type="catalytic activity">
    <reaction evidence="1">
        <text>N-terminal L-glutamyl-[protein] + L-leucyl-tRNA(Leu) = N-terminal L-leucyl-L-glutamyl-[protein] + tRNA(Leu) + H(+)</text>
        <dbReference type="Rhea" id="RHEA:50412"/>
        <dbReference type="Rhea" id="RHEA-COMP:9613"/>
        <dbReference type="Rhea" id="RHEA-COMP:9622"/>
        <dbReference type="Rhea" id="RHEA-COMP:12664"/>
        <dbReference type="Rhea" id="RHEA-COMP:12668"/>
        <dbReference type="ChEBI" id="CHEBI:15378"/>
        <dbReference type="ChEBI" id="CHEBI:64721"/>
        <dbReference type="ChEBI" id="CHEBI:78442"/>
        <dbReference type="ChEBI" id="CHEBI:78494"/>
        <dbReference type="ChEBI" id="CHEBI:133041"/>
        <dbReference type="EC" id="2.3.2.29"/>
    </reaction>
</comment>
<comment type="catalytic activity">
    <reaction evidence="1">
        <text>N-terminal L-aspartyl-[protein] + L-leucyl-tRNA(Leu) = N-terminal L-leucyl-L-aspartyl-[protein] + tRNA(Leu) + H(+)</text>
        <dbReference type="Rhea" id="RHEA:50420"/>
        <dbReference type="Rhea" id="RHEA-COMP:9613"/>
        <dbReference type="Rhea" id="RHEA-COMP:9622"/>
        <dbReference type="Rhea" id="RHEA-COMP:12669"/>
        <dbReference type="Rhea" id="RHEA-COMP:12674"/>
        <dbReference type="ChEBI" id="CHEBI:15378"/>
        <dbReference type="ChEBI" id="CHEBI:64720"/>
        <dbReference type="ChEBI" id="CHEBI:78442"/>
        <dbReference type="ChEBI" id="CHEBI:78494"/>
        <dbReference type="ChEBI" id="CHEBI:133042"/>
        <dbReference type="EC" id="2.3.2.29"/>
    </reaction>
</comment>
<comment type="subcellular location">
    <subcellularLocation>
        <location evidence="1">Cytoplasm</location>
    </subcellularLocation>
</comment>
<comment type="similarity">
    <text evidence="1">Belongs to the R-transferase family. Bpt subfamily.</text>
</comment>
<name>BPT_PSEA8</name>
<organism>
    <name type="scientific">Pseudomonas aeruginosa (strain LESB58)</name>
    <dbReference type="NCBI Taxonomy" id="557722"/>
    <lineage>
        <taxon>Bacteria</taxon>
        <taxon>Pseudomonadati</taxon>
        <taxon>Pseudomonadota</taxon>
        <taxon>Gammaproteobacteria</taxon>
        <taxon>Pseudomonadales</taxon>
        <taxon>Pseudomonadaceae</taxon>
        <taxon>Pseudomonas</taxon>
    </lineage>
</organism>
<proteinExistence type="inferred from homology"/>
<keyword id="KW-0012">Acyltransferase</keyword>
<keyword id="KW-0963">Cytoplasm</keyword>
<keyword id="KW-0808">Transferase</keyword>
<protein>
    <recommendedName>
        <fullName evidence="1">Aspartate/glutamate leucyltransferase</fullName>
        <ecNumber evidence="1">2.3.2.29</ecNumber>
    </recommendedName>
</protein>
<reference key="1">
    <citation type="journal article" date="2009" name="Genome Res.">
        <title>Newly introduced genomic prophage islands are critical determinants of in vivo competitiveness in the Liverpool epidemic strain of Pseudomonas aeruginosa.</title>
        <authorList>
            <person name="Winstanley C."/>
            <person name="Langille M.G.I."/>
            <person name="Fothergill J.L."/>
            <person name="Kukavica-Ibrulj I."/>
            <person name="Paradis-Bleau C."/>
            <person name="Sanschagrin F."/>
            <person name="Thomson N.R."/>
            <person name="Winsor G.L."/>
            <person name="Quail M.A."/>
            <person name="Lennard N."/>
            <person name="Bignell A."/>
            <person name="Clarke L."/>
            <person name="Seeger K."/>
            <person name="Saunders D."/>
            <person name="Harris D."/>
            <person name="Parkhill J."/>
            <person name="Hancock R.E.W."/>
            <person name="Brinkman F.S.L."/>
            <person name="Levesque R.C."/>
        </authorList>
    </citation>
    <scope>NUCLEOTIDE SEQUENCE [LARGE SCALE GENOMIC DNA]</scope>
    <source>
        <strain>LESB58</strain>
    </source>
</reference>
<evidence type="ECO:0000255" key="1">
    <source>
        <dbReference type="HAMAP-Rule" id="MF_00689"/>
    </source>
</evidence>
<dbReference type="EC" id="2.3.2.29" evidence="1"/>
<dbReference type="EMBL" id="FM209186">
    <property type="protein sequence ID" value="CAW27213.1"/>
    <property type="molecule type" value="Genomic_DNA"/>
</dbReference>
<dbReference type="RefSeq" id="WP_003108766.1">
    <property type="nucleotide sequence ID" value="NC_011770.1"/>
</dbReference>
<dbReference type="SMR" id="B7UV23"/>
<dbReference type="KEGG" id="pag:PLES_24871"/>
<dbReference type="HOGENOM" id="CLU_077607_0_0_6"/>
<dbReference type="GO" id="GO:0005737">
    <property type="term" value="C:cytoplasm"/>
    <property type="evidence" value="ECO:0007669"/>
    <property type="project" value="UniProtKB-SubCell"/>
</dbReference>
<dbReference type="GO" id="GO:0004057">
    <property type="term" value="F:arginyl-tRNA--protein transferase activity"/>
    <property type="evidence" value="ECO:0007669"/>
    <property type="project" value="InterPro"/>
</dbReference>
<dbReference type="GO" id="GO:0008914">
    <property type="term" value="F:leucyl-tRNA--protein transferase activity"/>
    <property type="evidence" value="ECO:0007669"/>
    <property type="project" value="UniProtKB-UniRule"/>
</dbReference>
<dbReference type="GO" id="GO:0071596">
    <property type="term" value="P:ubiquitin-dependent protein catabolic process via the N-end rule pathway"/>
    <property type="evidence" value="ECO:0007669"/>
    <property type="project" value="InterPro"/>
</dbReference>
<dbReference type="HAMAP" id="MF_00689">
    <property type="entry name" value="Bpt"/>
    <property type="match status" value="1"/>
</dbReference>
<dbReference type="InterPro" id="IPR016181">
    <property type="entry name" value="Acyl_CoA_acyltransferase"/>
</dbReference>
<dbReference type="InterPro" id="IPR017138">
    <property type="entry name" value="Asp_Glu_LeuTrfase"/>
</dbReference>
<dbReference type="InterPro" id="IPR030700">
    <property type="entry name" value="N-end_Aminoacyl_Trfase"/>
</dbReference>
<dbReference type="InterPro" id="IPR007472">
    <property type="entry name" value="N-end_Aminoacyl_Trfase_C"/>
</dbReference>
<dbReference type="InterPro" id="IPR007471">
    <property type="entry name" value="N-end_Aminoacyl_Trfase_N"/>
</dbReference>
<dbReference type="NCBIfam" id="NF002341">
    <property type="entry name" value="PRK01305.1-1"/>
    <property type="match status" value="1"/>
</dbReference>
<dbReference type="NCBIfam" id="NF002342">
    <property type="entry name" value="PRK01305.1-3"/>
    <property type="match status" value="1"/>
</dbReference>
<dbReference type="NCBIfam" id="NF002345">
    <property type="entry name" value="PRK01305.2-2"/>
    <property type="match status" value="1"/>
</dbReference>
<dbReference type="NCBIfam" id="NF002346">
    <property type="entry name" value="PRK01305.2-3"/>
    <property type="match status" value="1"/>
</dbReference>
<dbReference type="PANTHER" id="PTHR21367">
    <property type="entry name" value="ARGININE-TRNA-PROTEIN TRANSFERASE 1"/>
    <property type="match status" value="1"/>
</dbReference>
<dbReference type="PANTHER" id="PTHR21367:SF1">
    <property type="entry name" value="ARGINYL-TRNA--PROTEIN TRANSFERASE 1"/>
    <property type="match status" value="1"/>
</dbReference>
<dbReference type="Pfam" id="PF04377">
    <property type="entry name" value="ATE_C"/>
    <property type="match status" value="1"/>
</dbReference>
<dbReference type="Pfam" id="PF04376">
    <property type="entry name" value="ATE_N"/>
    <property type="match status" value="1"/>
</dbReference>
<dbReference type="PIRSF" id="PIRSF037208">
    <property type="entry name" value="ATE_pro_prd"/>
    <property type="match status" value="1"/>
</dbReference>
<dbReference type="SUPFAM" id="SSF55729">
    <property type="entry name" value="Acyl-CoA N-acyltransferases (Nat)"/>
    <property type="match status" value="1"/>
</dbReference>
<sequence length="235" mass="27826">MTELARLKFYATQPHPCSYLPEEQATTLFLDPSQPMDTQLYASLSEVGFRRSGDHLYRPHCQHCTACIAARIPVADFSPNRQQRRILKRNAELQVIRKRPSFNEEYYDLYRRYIEQRHADGDMYPPSRDQFATFLVRDLPFCCFFEFRLHGRLLAIAVTDVLPNGLSAVYTFYDPDEEQRSLGRYAILWQIAETERLGLQAVYLGYWIKNCRKMNYKTQYRPIELFVNQRWVALT</sequence>
<accession>B7UV23</accession>
<gene>
    <name evidence="1" type="primary">bpt</name>
    <name type="ordered locus">PLES_24871</name>
</gene>
<feature type="chain" id="PRO_1000131991" description="Aspartate/glutamate leucyltransferase">
    <location>
        <begin position="1"/>
        <end position="235"/>
    </location>
</feature>